<feature type="chain" id="PRO_0000165952" description="Uric acid-xanthine permease">
    <location>
        <begin position="1"/>
        <end position="574"/>
    </location>
</feature>
<feature type="transmembrane region" description="Helical" evidence="1">
    <location>
        <begin position="77"/>
        <end position="97"/>
    </location>
</feature>
<feature type="transmembrane region" description="Helical" evidence="1">
    <location>
        <begin position="111"/>
        <end position="131"/>
    </location>
</feature>
<feature type="transmembrane region" description="Helical" evidence="1">
    <location>
        <begin position="141"/>
        <end position="161"/>
    </location>
</feature>
<feature type="transmembrane region" description="Helical" evidence="1">
    <location>
        <begin position="188"/>
        <end position="209"/>
    </location>
</feature>
<feature type="transmembrane region" description="Helical" evidence="1">
    <location>
        <begin position="217"/>
        <end position="237"/>
    </location>
</feature>
<feature type="transmembrane region" description="Helical" evidence="1">
    <location>
        <begin position="264"/>
        <end position="284"/>
    </location>
</feature>
<feature type="transmembrane region" description="Helical" evidence="1">
    <location>
        <begin position="296"/>
        <end position="315"/>
    </location>
</feature>
<feature type="transmembrane region" description="Helical" evidence="1">
    <location>
        <begin position="338"/>
        <end position="361"/>
    </location>
</feature>
<feature type="transmembrane region" description="Helical" evidence="1">
    <location>
        <begin position="427"/>
        <end position="447"/>
    </location>
</feature>
<feature type="transmembrane region" description="Helical" evidence="1">
    <location>
        <begin position="451"/>
        <end position="471"/>
    </location>
</feature>
<feature type="transmembrane region" description="Helical" evidence="1">
    <location>
        <begin position="482"/>
        <end position="502"/>
    </location>
</feature>
<feature type="transmembrane region" description="Helical" evidence="1">
    <location>
        <begin position="522"/>
        <end position="542"/>
    </location>
</feature>
<feature type="region of interest" description="Disordered" evidence="2">
    <location>
        <begin position="1"/>
        <end position="20"/>
    </location>
</feature>
<feature type="region of interest" description="Disordered" evidence="2">
    <location>
        <begin position="555"/>
        <end position="574"/>
    </location>
</feature>
<feature type="cross-link" description="Glycyl lysine isopeptide (Lys-Gly) (interchain with G-Cter in ubiquitin)" evidence="7">
    <location>
        <position position="572"/>
    </location>
</feature>
<feature type="mutagenesis site" description="No effect." evidence="3">
    <original>F</original>
    <variation>Y</variation>
    <location>
        <position position="406"/>
    </location>
</feature>
<feature type="mutagenesis site" description="Decreased affinity for xanthine and uric acid." evidence="3 5 7">
    <original>Q</original>
    <variation>A</variation>
    <variation>N</variation>
    <variation>P</variation>
    <variation>S</variation>
    <location>
        <position position="408"/>
    </location>
</feature>
<feature type="mutagenesis site" description="Does not significantly affect substrate affinities at 37 degrees Celsius but has no uptake activity at 25 degrees Celsius. Confers moderate binding affinity for hypoxanthine, guanine and 7-deazanthine, enhances binding affinity for 8-azaxanthine and 8-thiouric acid." evidence="3 5 7">
    <original>Q</original>
    <variation>E</variation>
    <location>
        <position position="408"/>
    </location>
</feature>
<feature type="mutagenesis site" description="Does not significantly affect substrate affinities at 37 degrees Celsius but has no uptake activity at 25 degrees Celsius." evidence="3 5">
    <original>N</original>
    <variation>A</variation>
    <location>
        <position position="409"/>
    </location>
</feature>
<feature type="mutagenesis site" description="Total loss of function." evidence="3 5">
    <original>N</original>
    <variation>D</variation>
    <location>
        <position position="409"/>
    </location>
</feature>
<feature type="mutagenesis site" description="Increases affinity for xanthine, but not uric acid, 9-methylxanthine or 8-azaxanthine." evidence="3 5">
    <original>N</original>
    <variation>Q</variation>
    <location>
        <position position="409"/>
    </location>
</feature>
<feature type="mutagenesis site" description="Does not significantly affect substrate affinities at 37 degrees Celsius but has no uptake activity at 25 degrees Celsius." evidence="3 5">
    <original>N</original>
    <variation>S</variation>
    <location>
        <position position="409"/>
    </location>
</feature>
<feature type="mutagenesis site" description="Decreases affinity for uric acid significantly more than affinity for xanthine. Confers ability to grow on hypoxanthine." evidence="5 7">
    <original>G</original>
    <variation>A</variation>
    <location>
        <position position="411"/>
    </location>
</feature>
<feature type="mutagenesis site" description="Decreases affinity for uric acid significantly. Increases affinity for xanthine, 3-methylxanthine, 2-methylxanthine, 2-thioxanthine, 6-thioxanthine, oxypurinol and 8-thiouric acid. Confers ability to grow on hypoxanthine." evidence="5 7">
    <original>G</original>
    <variation>P</variation>
    <location>
        <position position="411"/>
    </location>
</feature>
<feature type="mutagenesis site" description="Total loss of function." evidence="5 7">
    <original>G</original>
    <variation>V</variation>
    <location>
        <position position="411"/>
    </location>
</feature>
<feature type="mutagenesis site" description="Does not significantly affect substrate affinities." evidence="3 5">
    <original>T</original>
    <variation>A</variation>
    <variation>S</variation>
    <location>
        <position position="416"/>
    </location>
</feature>
<feature type="mutagenesis site" description="Does not significantly affect substrate affinities at 37 degrees Celsius but has no uptake activity at 25 degrees Celsius." evidence="3 5">
    <original>T</original>
    <variation>D</variation>
    <location>
        <position position="416"/>
    </location>
</feature>
<feature type="mutagenesis site" description="Decreases affinity for uric acid significantly more than affinity for xanthine. Confers ability to grow on hypoxanthine." evidence="3 5">
    <original>T</original>
    <variation>N</variation>
    <location>
        <position position="416"/>
    </location>
</feature>
<feature type="mutagenesis site" description="Decreases affinity for uric acid significantly more than affinity for xanthine." evidence="5">
    <original>R</original>
    <variation>G</variation>
    <location>
        <position position="417"/>
    </location>
</feature>
<feature type="mutagenesis site" description="Does not significantly affect substrate affinities." evidence="5">
    <original>R</original>
    <variation>K</variation>
    <location>
        <position position="417"/>
    </location>
</feature>
<feature type="mutagenesis site" description="Does not significantly affect substrate affinities at 37 degrees Celsius but has no uptake activity at 25 degrees Celsius." evidence="5">
    <original>N</original>
    <variation>S</variation>
    <location>
        <position position="420"/>
    </location>
</feature>
<feature type="mutagenesis site" description="Decreases affinity for uric acid significantly more than affinity for xanthine." evidence="5">
    <original>R</original>
    <variation>T</variation>
    <variation>V</variation>
    <location>
        <position position="421"/>
    </location>
</feature>
<accession>Q07307</accession>
<accession>C8V364</accession>
<accession>Q5AXP8</accession>
<comment type="function">
    <text evidence="5 6 7">Uric acid-xanthine transporter.</text>
</comment>
<comment type="subcellular location">
    <subcellularLocation>
        <location evidence="7">Cell membrane</location>
        <topology evidence="7">Multi-pass membrane protein</topology>
    </subcellularLocation>
</comment>
<comment type="developmental stage">
    <text evidence="4">Not detected in resting conidiospores. Transcription is activated during the isotropic growth phase of conidiospores.</text>
</comment>
<comment type="induction">
    <text evidence="8">Inducible by 2-thiouric acid, and highly repressible by ammonium.</text>
</comment>
<comment type="PTM">
    <text evidence="7">Ubiquitinated by hulA. Ubiquitination leads to internalization, sorting into the endosomal pathway to the vacuolar lumen where uapA is eventually degraded.</text>
</comment>
<comment type="similarity">
    <text evidence="9">Belongs to the nucleobase:cation symporter-2 (NCS2) (TC 2.A.40) family.</text>
</comment>
<comment type="sequence caution" evidence="9">
    <conflict type="erroneous initiation">
        <sequence resource="EMBL-CDS" id="CBF71770"/>
    </conflict>
    <text>Extended N-terminus.</text>
</comment>
<comment type="sequence caution" evidence="9">
    <conflict type="erroneous initiation">
        <sequence resource="EMBL-CDS" id="EAA57687"/>
    </conflict>
    <text>Extended N-terminus.</text>
</comment>
<keyword id="KW-0002">3D-structure</keyword>
<keyword id="KW-1003">Cell membrane</keyword>
<keyword id="KW-1017">Isopeptide bond</keyword>
<keyword id="KW-0472">Membrane</keyword>
<keyword id="KW-1185">Reference proteome</keyword>
<keyword id="KW-0812">Transmembrane</keyword>
<keyword id="KW-1133">Transmembrane helix</keyword>
<keyword id="KW-0813">Transport</keyword>
<keyword id="KW-0832">Ubl conjugation</keyword>
<dbReference type="EMBL" id="X71807">
    <property type="protein sequence ID" value="CAA50681.2"/>
    <property type="molecule type" value="Genomic_DNA"/>
</dbReference>
<dbReference type="EMBL" id="AACD01000115">
    <property type="protein sequence ID" value="EAA57687.1"/>
    <property type="status" value="ALT_INIT"/>
    <property type="molecule type" value="Genomic_DNA"/>
</dbReference>
<dbReference type="EMBL" id="BN001301">
    <property type="protein sequence ID" value="CBF71770.1"/>
    <property type="status" value="ALT_INIT"/>
    <property type="molecule type" value="Genomic_DNA"/>
</dbReference>
<dbReference type="RefSeq" id="XP_664536.1">
    <property type="nucleotide sequence ID" value="XM_659444.1"/>
</dbReference>
<dbReference type="PDB" id="5I6C">
    <property type="method" value="X-ray"/>
    <property type="resolution" value="3.70 A"/>
    <property type="chains" value="A/B=1-574"/>
</dbReference>
<dbReference type="PDBsum" id="5I6C"/>
<dbReference type="SMR" id="Q07307"/>
<dbReference type="STRING" id="227321.Q07307"/>
<dbReference type="ChEMBL" id="CHEMBL4295591"/>
<dbReference type="TCDB" id="2.A.40.4.1">
    <property type="family name" value="the nucleobase/ascorbate transporter (nat) or nucleobase:cation symporter-2 (ncs2) family"/>
</dbReference>
<dbReference type="iPTMnet" id="Q07307"/>
<dbReference type="KEGG" id="ani:ANIA_06932"/>
<dbReference type="VEuPathDB" id="FungiDB:AN6932"/>
<dbReference type="eggNOG" id="ENOG502QQD4">
    <property type="taxonomic scope" value="Eukaryota"/>
</dbReference>
<dbReference type="HOGENOM" id="CLU_017959_7_0_1"/>
<dbReference type="InParanoid" id="Q07307"/>
<dbReference type="OrthoDB" id="1641903at2759"/>
<dbReference type="Proteomes" id="UP000000560">
    <property type="component" value="Chromosome I"/>
</dbReference>
<dbReference type="GO" id="GO:0034423">
    <property type="term" value="C:autophagosome lumen"/>
    <property type="evidence" value="ECO:0000314"/>
    <property type="project" value="UniProtKB"/>
</dbReference>
<dbReference type="GO" id="GO:0010008">
    <property type="term" value="C:endosome membrane"/>
    <property type="evidence" value="ECO:0000314"/>
    <property type="project" value="UniProtKB"/>
</dbReference>
<dbReference type="GO" id="GO:0000324">
    <property type="term" value="C:fungal-type vacuole"/>
    <property type="evidence" value="ECO:0000314"/>
    <property type="project" value="AspGD"/>
</dbReference>
<dbReference type="GO" id="GO:0005886">
    <property type="term" value="C:plasma membrane"/>
    <property type="evidence" value="ECO:0000314"/>
    <property type="project" value="UniProtKB"/>
</dbReference>
<dbReference type="GO" id="GO:0002060">
    <property type="term" value="F:purine nucleobase binding"/>
    <property type="evidence" value="ECO:0000314"/>
    <property type="project" value="AspGD"/>
</dbReference>
<dbReference type="GO" id="GO:0015143">
    <property type="term" value="F:urate transmembrane transporter activity"/>
    <property type="evidence" value="ECO:0000314"/>
    <property type="project" value="UniProtKB"/>
</dbReference>
<dbReference type="GO" id="GO:0042907">
    <property type="term" value="F:xanthine transmembrane transporter activity"/>
    <property type="evidence" value="ECO:0000314"/>
    <property type="project" value="AspGD"/>
</dbReference>
<dbReference type="GO" id="GO:0015747">
    <property type="term" value="P:urate transport"/>
    <property type="evidence" value="ECO:0000314"/>
    <property type="project" value="UniProtKB"/>
</dbReference>
<dbReference type="GO" id="GO:0042906">
    <property type="term" value="P:xanthine transport"/>
    <property type="evidence" value="ECO:0000314"/>
    <property type="project" value="AspGD"/>
</dbReference>
<dbReference type="InterPro" id="IPR006043">
    <property type="entry name" value="NCS2"/>
</dbReference>
<dbReference type="InterPro" id="IPR006042">
    <property type="entry name" value="Xan_ur_permease"/>
</dbReference>
<dbReference type="NCBIfam" id="TIGR00801">
    <property type="entry name" value="ncs2"/>
    <property type="match status" value="1"/>
</dbReference>
<dbReference type="PANTHER" id="PTHR42810">
    <property type="entry name" value="PURINE PERMEASE C1399.01C-RELATED"/>
    <property type="match status" value="1"/>
</dbReference>
<dbReference type="PANTHER" id="PTHR42810:SF2">
    <property type="entry name" value="PURINE PERMEASE C1399.01C-RELATED"/>
    <property type="match status" value="1"/>
</dbReference>
<dbReference type="Pfam" id="PF00860">
    <property type="entry name" value="Xan_ur_permease"/>
    <property type="match status" value="1"/>
</dbReference>
<dbReference type="PROSITE" id="PS01116">
    <property type="entry name" value="XANTH_URACIL_PERMASE"/>
    <property type="match status" value="1"/>
</dbReference>
<protein>
    <recommendedName>
        <fullName>Uric acid-xanthine permease</fullName>
    </recommendedName>
    <alternativeName>
        <fullName>UAPA transporter</fullName>
    </alternativeName>
</protein>
<gene>
    <name type="primary">uapA</name>
    <name type="ORF">AN6932</name>
</gene>
<sequence>MDNSIHSTDGPDSVIPNSNPKKTVRQRVRLLARHLTTREGLIGDYDYGFLFRPELPFMKKDPRAPPFFGLNEKIPVLLAFILGLQHALAMLAGVVTPPLIISSSLSLPSDLQQYLVSTSLIVCGLLSMVQITRFHIYKTPYYIGSGVLSVMGVSFSIISVASGAFNQMYSNGFCQLDEAGNRLPCPEAYGALIGTSACCALVEILLAFVPPKVIQKIFPPIVTGPTVMLIGISLIGTGFKDWAGGSACMDDGMLCPSATAPRPLPWGSPEFIGLGFLVFVSIILCERFGAPIMKSCSVVIGLLVGCIVAAACGYFSHADIDAAPAASFIWVKTFPLSVYGPMVLPIIAVFIICACECIGDVTATCDVSRLEVRGGTFESRIQGAVLADGINSVVAALATMTPMTTFAQNNGVIALTRCANRWAGYCCCLILIVAGIFAKFAAAIVAIPNSVMGGMKTFLFASVVISGQAIVAKAPFTRRNRFILTASMALGYGATLVPTWFGNVFPQTENRDLEGFENAIELVLETGFAVTAFVAMLLNAIMPAEVEEIGAVTPMPVSAHDNRDGEAEYQSKQA</sequence>
<organism>
    <name type="scientific">Emericella nidulans (strain FGSC A4 / ATCC 38163 / CBS 112.46 / NRRL 194 / M139)</name>
    <name type="common">Aspergillus nidulans</name>
    <dbReference type="NCBI Taxonomy" id="227321"/>
    <lineage>
        <taxon>Eukaryota</taxon>
        <taxon>Fungi</taxon>
        <taxon>Dikarya</taxon>
        <taxon>Ascomycota</taxon>
        <taxon>Pezizomycotina</taxon>
        <taxon>Eurotiomycetes</taxon>
        <taxon>Eurotiomycetidae</taxon>
        <taxon>Eurotiales</taxon>
        <taxon>Aspergillaceae</taxon>
        <taxon>Aspergillus</taxon>
        <taxon>Aspergillus subgen. Nidulantes</taxon>
    </lineage>
</organism>
<name>UAPA_EMENI</name>
<evidence type="ECO:0000255" key="1"/>
<evidence type="ECO:0000256" key="2">
    <source>
        <dbReference type="SAM" id="MobiDB-lite"/>
    </source>
</evidence>
<evidence type="ECO:0000269" key="3">
    <source>
    </source>
</evidence>
<evidence type="ECO:0000269" key="4">
    <source>
    </source>
</evidence>
<evidence type="ECO:0000269" key="5">
    <source>
    </source>
</evidence>
<evidence type="ECO:0000269" key="6">
    <source>
    </source>
</evidence>
<evidence type="ECO:0000269" key="7">
    <source>
    </source>
</evidence>
<evidence type="ECO:0000269" key="8">
    <source>
    </source>
</evidence>
<evidence type="ECO:0000305" key="9"/>
<reference key="1">
    <citation type="journal article" date="1993" name="J. Biol. Chem.">
        <title>Sequence and regulation of the uapA gene encoding a uric acid-xanthine permease in the fungus Aspergillus nidulans.</title>
        <authorList>
            <person name="Gorfinkiel L."/>
            <person name="Diallinas G."/>
            <person name="Scazzocchio C."/>
        </authorList>
    </citation>
    <scope>NUCLEOTIDE SEQUENCE [GENOMIC DNA]</scope>
    <scope>INDUCTION</scope>
</reference>
<reference key="2">
    <citation type="journal article" date="2005" name="J. Mol. Biol.">
        <title>The nucleobase-ascorbate transporter (NAT) signature motif in UapA defines the function of the purine translocation pathway.</title>
        <authorList>
            <person name="Koukaki M."/>
            <person name="Vlanti A."/>
            <person name="Goudela S."/>
            <person name="Pantazopoulou A."/>
            <person name="Gioule H."/>
            <person name="Tournaviti S."/>
            <person name="Diallinas G."/>
        </authorList>
    </citation>
    <scope>SEQUENCE REVISION TO N-TERMINUS; 57-58; 65; 164 AND 191</scope>
    <scope>FUNCTION</scope>
    <scope>MUTAGENESIS OF GLN-408; ASN-409; GLY-411; THR-416; ARG-417; ASN-420 AND ARG-421</scope>
</reference>
<reference key="3">
    <citation type="journal article" date="2005" name="Nature">
        <title>Sequencing of Aspergillus nidulans and comparative analysis with A. fumigatus and A. oryzae.</title>
        <authorList>
            <person name="Galagan J.E."/>
            <person name="Calvo S.E."/>
            <person name="Cuomo C."/>
            <person name="Ma L.-J."/>
            <person name="Wortman J.R."/>
            <person name="Batzoglou S."/>
            <person name="Lee S.-I."/>
            <person name="Bastuerkmen M."/>
            <person name="Spevak C.C."/>
            <person name="Clutterbuck J."/>
            <person name="Kapitonov V."/>
            <person name="Jurka J."/>
            <person name="Scazzocchio C."/>
            <person name="Farman M.L."/>
            <person name="Butler J."/>
            <person name="Purcell S."/>
            <person name="Harris S."/>
            <person name="Braus G.H."/>
            <person name="Draht O."/>
            <person name="Busch S."/>
            <person name="D'Enfert C."/>
            <person name="Bouchier C."/>
            <person name="Goldman G.H."/>
            <person name="Bell-Pedersen D."/>
            <person name="Griffiths-Jones S."/>
            <person name="Doonan J.H."/>
            <person name="Yu J."/>
            <person name="Vienken K."/>
            <person name="Pain A."/>
            <person name="Freitag M."/>
            <person name="Selker E.U."/>
            <person name="Archer D.B."/>
            <person name="Penalva M.A."/>
            <person name="Oakley B.R."/>
            <person name="Momany M."/>
            <person name="Tanaka T."/>
            <person name="Kumagai T."/>
            <person name="Asai K."/>
            <person name="Machida M."/>
            <person name="Nierman W.C."/>
            <person name="Denning D.W."/>
            <person name="Caddick M.X."/>
            <person name="Hynes M."/>
            <person name="Paoletti M."/>
            <person name="Fischer R."/>
            <person name="Miller B.L."/>
            <person name="Dyer P.S."/>
            <person name="Sachs M.S."/>
            <person name="Osmani S.A."/>
            <person name="Birren B.W."/>
        </authorList>
    </citation>
    <scope>NUCLEOTIDE SEQUENCE [LARGE SCALE GENOMIC DNA]</scope>
    <source>
        <strain>FGSC A4 / ATCC 38163 / CBS 112.46 / NRRL 194 / M139</strain>
    </source>
</reference>
<reference key="4">
    <citation type="journal article" date="2009" name="Fungal Genet. Biol.">
        <title>The 2008 update of the Aspergillus nidulans genome annotation: a community effort.</title>
        <authorList>
            <person name="Wortman J.R."/>
            <person name="Gilsenan J.M."/>
            <person name="Joardar V."/>
            <person name="Deegan J."/>
            <person name="Clutterbuck J."/>
            <person name="Andersen M.R."/>
            <person name="Archer D."/>
            <person name="Bencina M."/>
            <person name="Braus G."/>
            <person name="Coutinho P."/>
            <person name="von Dohren H."/>
            <person name="Doonan J."/>
            <person name="Driessen A.J."/>
            <person name="Durek P."/>
            <person name="Espeso E."/>
            <person name="Fekete E."/>
            <person name="Flipphi M."/>
            <person name="Estrada C.G."/>
            <person name="Geysens S."/>
            <person name="Goldman G."/>
            <person name="de Groot P.W."/>
            <person name="Hansen K."/>
            <person name="Harris S.D."/>
            <person name="Heinekamp T."/>
            <person name="Helmstaedt K."/>
            <person name="Henrissat B."/>
            <person name="Hofmann G."/>
            <person name="Homan T."/>
            <person name="Horio T."/>
            <person name="Horiuchi H."/>
            <person name="James S."/>
            <person name="Jones M."/>
            <person name="Karaffa L."/>
            <person name="Karanyi Z."/>
            <person name="Kato M."/>
            <person name="Keller N."/>
            <person name="Kelly D.E."/>
            <person name="Kiel J.A."/>
            <person name="Kim J.M."/>
            <person name="van der Klei I.J."/>
            <person name="Klis F.M."/>
            <person name="Kovalchuk A."/>
            <person name="Krasevec N."/>
            <person name="Kubicek C.P."/>
            <person name="Liu B."/>
            <person name="Maccabe A."/>
            <person name="Meyer V."/>
            <person name="Mirabito P."/>
            <person name="Miskei M."/>
            <person name="Mos M."/>
            <person name="Mullins J."/>
            <person name="Nelson D.R."/>
            <person name="Nielsen J."/>
            <person name="Oakley B.R."/>
            <person name="Osmani S.A."/>
            <person name="Pakula T."/>
            <person name="Paszewski A."/>
            <person name="Paulsen I."/>
            <person name="Pilsyk S."/>
            <person name="Pocsi I."/>
            <person name="Punt P.J."/>
            <person name="Ram A.F."/>
            <person name="Ren Q."/>
            <person name="Robellet X."/>
            <person name="Robson G."/>
            <person name="Seiboth B."/>
            <person name="van Solingen P."/>
            <person name="Specht T."/>
            <person name="Sun J."/>
            <person name="Taheri-Talesh N."/>
            <person name="Takeshita N."/>
            <person name="Ussery D."/>
            <person name="vanKuyk P.A."/>
            <person name="Visser H."/>
            <person name="van de Vondervoort P.J."/>
            <person name="de Vries R.P."/>
            <person name="Walton J."/>
            <person name="Xiang X."/>
            <person name="Xiong Y."/>
            <person name="Zeng A.P."/>
            <person name="Brandt B.W."/>
            <person name="Cornell M.J."/>
            <person name="van den Hondel C.A."/>
            <person name="Visser J."/>
            <person name="Oliver S.G."/>
            <person name="Turner G."/>
        </authorList>
    </citation>
    <scope>GENOME REANNOTATION</scope>
    <source>
        <strain>FGSC A4 / ATCC 38163 / CBS 112.46 / NRRL 194 / M139</strain>
    </source>
</reference>
<reference key="5">
    <citation type="journal article" date="2000" name="Mol. Membr. Biol.">
        <title>Amino acid residues N450 and Q449 are critical for the uptake capacity and specificity of UapA, a prototype of a nucleobase-ascorbate transporter family.</title>
        <authorList>
            <person name="Meintanis C."/>
            <person name="Karagouni A.D."/>
            <person name="Diallinas G."/>
        </authorList>
    </citation>
    <scope>MUTAGENESIS OF PHE-406; GLN-408; ASN-409 AND THR-416</scope>
</reference>
<reference key="6">
    <citation type="journal article" date="2004" name="Mol. Microbiol.">
        <title>Transcription of purine transporter genes is activated during the isotropic growth phase of Aspergillus nidulans conidia.</title>
        <authorList>
            <person name="Amillis S."/>
            <person name="Cecchetto G."/>
            <person name="Sophianopoulou V."/>
            <person name="Koukaki M."/>
            <person name="Scazzocchio C."/>
            <person name="Diallinas G."/>
        </authorList>
    </citation>
    <scope>DEVELOPMENTAL STAGE</scope>
</reference>
<reference key="7">
    <citation type="journal article" date="2005" name="Mol. Membr. Biol.">
        <title>Comparative substrate recognition by bacterial and fungal purine transporters of the NAT/NCS2 family.</title>
        <authorList>
            <person name="Goudela S."/>
            <person name="Karatza P."/>
            <person name="Koukaki M."/>
            <person name="Frillingos S."/>
            <person name="Diallinas G."/>
        </authorList>
    </citation>
    <scope>FUNCTION</scope>
</reference>
<reference key="8">
    <citation type="journal article" date="2010" name="Mol. Microbiol.">
        <title>Transport-dependent endocytosis and turnover of a uric acid-xanthine permease.</title>
        <authorList>
            <person name="Gournas C."/>
            <person name="Amillis S."/>
            <person name="Vlanti A."/>
            <person name="Diallinas G."/>
        </authorList>
    </citation>
    <scope>SUBCELLULAR LOCATION</scope>
    <scope>FUNCTION</scope>
    <scope>MUTAGENESIS OF GLN-408 AND GLY-411</scope>
    <scope>UBIQUITINATION AT LYS-572</scope>
</reference>
<proteinExistence type="evidence at protein level"/>